<accession>O67399</accession>
<gene>
    <name type="primary">leuD</name>
    <name type="ordered locus">aq_1398</name>
</gene>
<comment type="function">
    <text evidence="1">Catalyzes the isomerization between 2-isopropylmalate and 3-isopropylmalate, via the formation of 2-isopropylmaleate.</text>
</comment>
<comment type="catalytic activity">
    <reaction>
        <text>(2R,3S)-3-isopropylmalate = (2S)-2-isopropylmalate</text>
        <dbReference type="Rhea" id="RHEA:32287"/>
        <dbReference type="ChEBI" id="CHEBI:1178"/>
        <dbReference type="ChEBI" id="CHEBI:35121"/>
        <dbReference type="EC" id="4.2.1.33"/>
    </reaction>
</comment>
<comment type="pathway">
    <text>Amino-acid biosynthesis; L-leucine biosynthesis; L-leucine from 3-methyl-2-oxobutanoate: step 2/4.</text>
</comment>
<comment type="subunit">
    <text evidence="1">Heterodimer of LeuC and LeuD.</text>
</comment>
<comment type="similarity">
    <text evidence="2">Belongs to the LeuD family. LeuD type 2 subfamily.</text>
</comment>
<comment type="sequence caution" evidence="2">
    <conflict type="erroneous initiation">
        <sequence resource="EMBL-CDS" id="AAC07359"/>
    </conflict>
</comment>
<dbReference type="EC" id="4.2.1.33"/>
<dbReference type="EMBL" id="AE000657">
    <property type="protein sequence ID" value="AAC07359.1"/>
    <property type="status" value="ALT_INIT"/>
    <property type="molecule type" value="Genomic_DNA"/>
</dbReference>
<dbReference type="PIR" id="E70421">
    <property type="entry name" value="E70421"/>
</dbReference>
<dbReference type="RefSeq" id="NP_213964.2">
    <property type="nucleotide sequence ID" value="NC_000918.1"/>
</dbReference>
<dbReference type="SMR" id="O67399"/>
<dbReference type="FunCoup" id="O67399">
    <property type="interactions" value="455"/>
</dbReference>
<dbReference type="STRING" id="224324.aq_1398"/>
<dbReference type="EnsemblBacteria" id="AAC07359">
    <property type="protein sequence ID" value="AAC07359"/>
    <property type="gene ID" value="aq_1398"/>
</dbReference>
<dbReference type="KEGG" id="aae:aq_1398"/>
<dbReference type="PATRIC" id="fig|224324.8.peg.1093"/>
<dbReference type="eggNOG" id="COG0066">
    <property type="taxonomic scope" value="Bacteria"/>
</dbReference>
<dbReference type="HOGENOM" id="CLU_081378_1_1_0"/>
<dbReference type="InParanoid" id="O67399"/>
<dbReference type="OrthoDB" id="9777465at2"/>
<dbReference type="UniPathway" id="UPA00048">
    <property type="reaction ID" value="UER00071"/>
</dbReference>
<dbReference type="Proteomes" id="UP000000798">
    <property type="component" value="Chromosome"/>
</dbReference>
<dbReference type="GO" id="GO:0003861">
    <property type="term" value="F:3-isopropylmalate dehydratase activity"/>
    <property type="evidence" value="ECO:0007669"/>
    <property type="project" value="UniProtKB-UniRule"/>
</dbReference>
<dbReference type="GO" id="GO:0009098">
    <property type="term" value="P:L-leucine biosynthetic process"/>
    <property type="evidence" value="ECO:0007669"/>
    <property type="project" value="UniProtKB-UniRule"/>
</dbReference>
<dbReference type="CDD" id="cd01577">
    <property type="entry name" value="IPMI_Swivel"/>
    <property type="match status" value="1"/>
</dbReference>
<dbReference type="FunFam" id="3.20.19.10:FF:000007">
    <property type="entry name" value="Isopropylmalate/citramalate isomerase small subunit"/>
    <property type="match status" value="1"/>
</dbReference>
<dbReference type="Gene3D" id="3.20.19.10">
    <property type="entry name" value="Aconitase, domain 4"/>
    <property type="match status" value="1"/>
</dbReference>
<dbReference type="HAMAP" id="MF_01032">
    <property type="entry name" value="LeuD_type2"/>
    <property type="match status" value="1"/>
</dbReference>
<dbReference type="InterPro" id="IPR015928">
    <property type="entry name" value="Aconitase/3IPM_dehydase_swvl"/>
</dbReference>
<dbReference type="InterPro" id="IPR000573">
    <property type="entry name" value="AconitaseA/IPMdHydase_ssu_swvl"/>
</dbReference>
<dbReference type="InterPro" id="IPR033940">
    <property type="entry name" value="IPMI_Swivel"/>
</dbReference>
<dbReference type="InterPro" id="IPR050075">
    <property type="entry name" value="LeuD"/>
</dbReference>
<dbReference type="InterPro" id="IPR011824">
    <property type="entry name" value="LeuD/DmdB_bac"/>
</dbReference>
<dbReference type="InterPro" id="IPR011827">
    <property type="entry name" value="LeuD_type2/HacB/DmdB"/>
</dbReference>
<dbReference type="NCBIfam" id="TIGR02084">
    <property type="entry name" value="leud"/>
    <property type="match status" value="1"/>
</dbReference>
<dbReference type="NCBIfam" id="TIGR02087">
    <property type="entry name" value="LEUD_arch"/>
    <property type="match status" value="1"/>
</dbReference>
<dbReference type="PANTHER" id="PTHR43345:SF2">
    <property type="entry name" value="3-ISOPROPYLMALATE DEHYDRATASE SMALL SUBUNIT 1"/>
    <property type="match status" value="1"/>
</dbReference>
<dbReference type="PANTHER" id="PTHR43345">
    <property type="entry name" value="3-ISOPROPYLMALATE DEHYDRATASE SMALL SUBUNIT 2-RELATED-RELATED"/>
    <property type="match status" value="1"/>
</dbReference>
<dbReference type="Pfam" id="PF00694">
    <property type="entry name" value="Aconitase_C"/>
    <property type="match status" value="1"/>
</dbReference>
<dbReference type="SUPFAM" id="SSF52016">
    <property type="entry name" value="LeuD/IlvD-like"/>
    <property type="match status" value="1"/>
</dbReference>
<keyword id="KW-0028">Amino-acid biosynthesis</keyword>
<keyword id="KW-0100">Branched-chain amino acid biosynthesis</keyword>
<keyword id="KW-0432">Leucine biosynthesis</keyword>
<keyword id="KW-0456">Lyase</keyword>
<keyword id="KW-1185">Reference proteome</keyword>
<feature type="chain" id="PRO_0000141920" description="3-isopropylmalate dehydratase small subunit">
    <location>
        <begin position="1"/>
        <end position="168"/>
    </location>
</feature>
<sequence>MQMKFRGRVWKFGDNVDTDQIIPARYLNTSDPYELAKHVMEDSEHPEFAKEHKEGDIIVAGKNFGSGSSREHAPIAIKYSGVPVVIAKSFARIFFRNAINIGLPIVEAPEAVDEIEHGDEIEVDLEKGVIKNLRTGKEYQATKFPKELQDILKAGGLMAYAKEKLASK</sequence>
<organism>
    <name type="scientific">Aquifex aeolicus (strain VF5)</name>
    <dbReference type="NCBI Taxonomy" id="224324"/>
    <lineage>
        <taxon>Bacteria</taxon>
        <taxon>Pseudomonadati</taxon>
        <taxon>Aquificota</taxon>
        <taxon>Aquificia</taxon>
        <taxon>Aquificales</taxon>
        <taxon>Aquificaceae</taxon>
        <taxon>Aquifex</taxon>
    </lineage>
</organism>
<proteinExistence type="inferred from homology"/>
<reference key="1">
    <citation type="journal article" date="1998" name="Nature">
        <title>The complete genome of the hyperthermophilic bacterium Aquifex aeolicus.</title>
        <authorList>
            <person name="Deckert G."/>
            <person name="Warren P.V."/>
            <person name="Gaasterland T."/>
            <person name="Young W.G."/>
            <person name="Lenox A.L."/>
            <person name="Graham D.E."/>
            <person name="Overbeek R."/>
            <person name="Snead M.A."/>
            <person name="Keller M."/>
            <person name="Aujay M."/>
            <person name="Huber R."/>
            <person name="Feldman R.A."/>
            <person name="Short J.M."/>
            <person name="Olsen G.J."/>
            <person name="Swanson R.V."/>
        </authorList>
    </citation>
    <scope>NUCLEOTIDE SEQUENCE [LARGE SCALE GENOMIC DNA]</scope>
    <source>
        <strain>VF5</strain>
    </source>
</reference>
<protein>
    <recommendedName>
        <fullName>3-isopropylmalate dehydratase small subunit</fullName>
        <ecNumber>4.2.1.33</ecNumber>
    </recommendedName>
    <alternativeName>
        <fullName>Alpha-IPM isomerase</fullName>
        <shortName>IPMI</shortName>
    </alternativeName>
    <alternativeName>
        <fullName>Isopropylmalate isomerase</fullName>
    </alternativeName>
</protein>
<name>LEUD_AQUAE</name>
<evidence type="ECO:0000250" key="1"/>
<evidence type="ECO:0000305" key="2"/>